<comment type="function">
    <text evidence="1">Subunit of the replication factor C (RFC) complex which acts during elongation of primed DNA templates by DNA polymerases delta and epsilon, and is necessary for ATP-dependent loading of proliferating cell nuclear antigen (PCNA) onto primed DNA (By similarity). This subunit binds ATP (By similarity).</text>
</comment>
<comment type="subunit">
    <text evidence="1">Subunit of the RFC complex, an heteropentameric complex consisting of a large subunit RFC1 and four small subunits RFC2, RFC3, RFC4 and RFC5; the RFC complex interacts with PCNA. Forms an heterotetrameric complex with RFC3, RFC4 and RFC5; this complex has ATPase activity but is not stimulated by PCNA. The heterotetramer of subunits RFC2, RFC3, RFC4 and RFC5 interacts with RAD17.</text>
</comment>
<comment type="subcellular location">
    <subcellularLocation>
        <location evidence="4">Nucleus</location>
    </subcellularLocation>
</comment>
<comment type="similarity">
    <text evidence="4">Belongs to the activator 1 small subunits family.</text>
</comment>
<evidence type="ECO:0000250" key="1">
    <source>
        <dbReference type="UniProtKB" id="P35250"/>
    </source>
</evidence>
<evidence type="ECO:0000255" key="2"/>
<evidence type="ECO:0000256" key="3">
    <source>
        <dbReference type="SAM" id="MobiDB-lite"/>
    </source>
</evidence>
<evidence type="ECO:0000305" key="4"/>
<dbReference type="EMBL" id="U12438">
    <property type="protein sequence ID" value="AAA20552.1"/>
    <property type="molecule type" value="mRNA"/>
</dbReference>
<dbReference type="PIR" id="I50704">
    <property type="entry name" value="I50704"/>
</dbReference>
<dbReference type="RefSeq" id="NP_990861.1">
    <property type="nucleotide sequence ID" value="NM_205530.2"/>
</dbReference>
<dbReference type="SMR" id="P53033"/>
<dbReference type="FunCoup" id="P53033">
    <property type="interactions" value="1645"/>
</dbReference>
<dbReference type="STRING" id="9031.ENSGALP00000052755"/>
<dbReference type="PaxDb" id="9031-ENSGALP00000001978"/>
<dbReference type="Ensembl" id="ENSGALT00010071167.1">
    <property type="protein sequence ID" value="ENSGALP00010043858.1"/>
    <property type="gene ID" value="ENSGALG00010029419.1"/>
</dbReference>
<dbReference type="GeneID" id="396542"/>
<dbReference type="KEGG" id="gga:396542"/>
<dbReference type="CTD" id="5982"/>
<dbReference type="VEuPathDB" id="HostDB:geneid_396542"/>
<dbReference type="eggNOG" id="KOG0991">
    <property type="taxonomic scope" value="Eukaryota"/>
</dbReference>
<dbReference type="GeneTree" id="ENSGT00550000075050"/>
<dbReference type="HOGENOM" id="CLU_042324_0_1_1"/>
<dbReference type="InParanoid" id="P53033"/>
<dbReference type="OMA" id="SCNYSSQ"/>
<dbReference type="OrthoDB" id="4199794at2759"/>
<dbReference type="PhylomeDB" id="P53033"/>
<dbReference type="TreeFam" id="TF300585"/>
<dbReference type="Reactome" id="R-GGA-110312">
    <property type="pathway name" value="Translesion synthesis by REV1"/>
</dbReference>
<dbReference type="Reactome" id="R-GGA-110314">
    <property type="pathway name" value="Recognition of DNA damage by PCNA-containing replication complex"/>
</dbReference>
<dbReference type="Reactome" id="R-GGA-110320">
    <property type="pathway name" value="Translesion Synthesis by POLH"/>
</dbReference>
<dbReference type="Reactome" id="R-GGA-174411">
    <property type="pathway name" value="Polymerase switching on the C-strand of the telomere"/>
</dbReference>
<dbReference type="Reactome" id="R-GGA-176187">
    <property type="pathway name" value="Activation of ATR in response to replication stress"/>
</dbReference>
<dbReference type="Reactome" id="R-GGA-217106">
    <property type="pathway name" value="Chk1-controlled and DNA-damage induced centrosome duplication"/>
</dbReference>
<dbReference type="Reactome" id="R-GGA-351451">
    <property type="pathway name" value="Homologous recombination repair of replication-dependent double-strand breaks"/>
</dbReference>
<dbReference type="Reactome" id="R-GGA-353303">
    <property type="pathway name" value="Nucleotide Excision Repair"/>
</dbReference>
<dbReference type="Reactome" id="R-GGA-5655862">
    <property type="pathway name" value="Translesion synthesis by POLK"/>
</dbReference>
<dbReference type="Reactome" id="R-GGA-5656121">
    <property type="pathway name" value="Translesion synthesis by POLI"/>
</dbReference>
<dbReference type="Reactome" id="R-GGA-5656169">
    <property type="pathway name" value="Termination of translesion DNA synthesis"/>
</dbReference>
<dbReference type="Reactome" id="R-GGA-5685938">
    <property type="pathway name" value="HDR through Single Strand Annealing (SSA)"/>
</dbReference>
<dbReference type="Reactome" id="R-GGA-5685942">
    <property type="pathway name" value="HDR through Homologous Recombination (HRR)"/>
</dbReference>
<dbReference type="Reactome" id="R-GGA-5693607">
    <property type="pathway name" value="Processing of DNA double-strand break ends"/>
</dbReference>
<dbReference type="Reactome" id="R-GGA-5696397">
    <property type="pathway name" value="Gap-filling DNA repair synthesis and ligation in GG-NER"/>
</dbReference>
<dbReference type="Reactome" id="R-GGA-5696400">
    <property type="pathway name" value="Dual Incision in GG-NER"/>
</dbReference>
<dbReference type="Reactome" id="R-GGA-6782135">
    <property type="pathway name" value="Dual incision in TC-NER"/>
</dbReference>
<dbReference type="Reactome" id="R-GGA-6782210">
    <property type="pathway name" value="Gap-filling DNA repair synthesis and ligation in TC-NER"/>
</dbReference>
<dbReference type="Reactome" id="R-GGA-69091">
    <property type="pathway name" value="Polymerase switching"/>
</dbReference>
<dbReference type="PRO" id="PR:P53033"/>
<dbReference type="Proteomes" id="UP000000539">
    <property type="component" value="Chromosome 19"/>
</dbReference>
<dbReference type="Bgee" id="ENSGALG00000029449">
    <property type="expression patterns" value="Expressed in spleen and 12 other cell types or tissues"/>
</dbReference>
<dbReference type="GO" id="GO:0005663">
    <property type="term" value="C:DNA replication factor C complex"/>
    <property type="evidence" value="ECO:0000318"/>
    <property type="project" value="GO_Central"/>
</dbReference>
<dbReference type="GO" id="GO:0005654">
    <property type="term" value="C:nucleoplasm"/>
    <property type="evidence" value="ECO:0000304"/>
    <property type="project" value="Reactome"/>
</dbReference>
<dbReference type="GO" id="GO:0005634">
    <property type="term" value="C:nucleus"/>
    <property type="evidence" value="ECO:0000318"/>
    <property type="project" value="GO_Central"/>
</dbReference>
<dbReference type="GO" id="GO:0005524">
    <property type="term" value="F:ATP binding"/>
    <property type="evidence" value="ECO:0007669"/>
    <property type="project" value="UniProtKB-KW"/>
</dbReference>
<dbReference type="GO" id="GO:0016887">
    <property type="term" value="F:ATP hydrolysis activity"/>
    <property type="evidence" value="ECO:0007669"/>
    <property type="project" value="InterPro"/>
</dbReference>
<dbReference type="GO" id="GO:0003677">
    <property type="term" value="F:DNA binding"/>
    <property type="evidence" value="ECO:0007669"/>
    <property type="project" value="InterPro"/>
</dbReference>
<dbReference type="GO" id="GO:0006281">
    <property type="term" value="P:DNA repair"/>
    <property type="evidence" value="ECO:0000318"/>
    <property type="project" value="GO_Central"/>
</dbReference>
<dbReference type="GO" id="GO:0006261">
    <property type="term" value="P:DNA-templated DNA replication"/>
    <property type="evidence" value="ECO:0000318"/>
    <property type="project" value="GO_Central"/>
</dbReference>
<dbReference type="CDD" id="cd00009">
    <property type="entry name" value="AAA"/>
    <property type="match status" value="1"/>
</dbReference>
<dbReference type="CDD" id="cd18140">
    <property type="entry name" value="HLD_clamp_RFC"/>
    <property type="match status" value="1"/>
</dbReference>
<dbReference type="FunFam" id="1.20.272.10:FF:000006">
    <property type="entry name" value="Replication factor C subunit 2"/>
    <property type="match status" value="1"/>
</dbReference>
<dbReference type="FunFam" id="1.10.8.60:FF:000012">
    <property type="entry name" value="Replication factor C subunit 4"/>
    <property type="match status" value="1"/>
</dbReference>
<dbReference type="FunFam" id="3.40.50.300:FF:000107">
    <property type="entry name" value="Replication factor C subunit 4"/>
    <property type="match status" value="1"/>
</dbReference>
<dbReference type="Gene3D" id="1.10.8.60">
    <property type="match status" value="1"/>
</dbReference>
<dbReference type="Gene3D" id="1.20.272.10">
    <property type="match status" value="1"/>
</dbReference>
<dbReference type="Gene3D" id="3.40.50.300">
    <property type="entry name" value="P-loop containing nucleotide triphosphate hydrolases"/>
    <property type="match status" value="1"/>
</dbReference>
<dbReference type="InterPro" id="IPR003593">
    <property type="entry name" value="AAA+_ATPase"/>
</dbReference>
<dbReference type="InterPro" id="IPR003959">
    <property type="entry name" value="ATPase_AAA_core"/>
</dbReference>
<dbReference type="InterPro" id="IPR008921">
    <property type="entry name" value="DNA_pol3_clamp-load_cplx_C"/>
</dbReference>
<dbReference type="InterPro" id="IPR050238">
    <property type="entry name" value="DNA_Rep/Repair_Clamp_Loader"/>
</dbReference>
<dbReference type="InterPro" id="IPR027417">
    <property type="entry name" value="P-loop_NTPase"/>
</dbReference>
<dbReference type="InterPro" id="IPR013748">
    <property type="entry name" value="Rep_factorC_C"/>
</dbReference>
<dbReference type="InterPro" id="IPR047854">
    <property type="entry name" value="RFC_lid"/>
</dbReference>
<dbReference type="NCBIfam" id="NF001679">
    <property type="entry name" value="PRK00440.1"/>
    <property type="match status" value="1"/>
</dbReference>
<dbReference type="PANTHER" id="PTHR11669">
    <property type="entry name" value="REPLICATION FACTOR C / DNA POLYMERASE III GAMMA-TAU SUBUNIT"/>
    <property type="match status" value="1"/>
</dbReference>
<dbReference type="PANTHER" id="PTHR11669:SF5">
    <property type="entry name" value="REPLICATION FACTOR C SUBUNIT 2"/>
    <property type="match status" value="1"/>
</dbReference>
<dbReference type="Pfam" id="PF00004">
    <property type="entry name" value="AAA"/>
    <property type="match status" value="1"/>
</dbReference>
<dbReference type="Pfam" id="PF08542">
    <property type="entry name" value="Rep_fac_C"/>
    <property type="match status" value="1"/>
</dbReference>
<dbReference type="SMART" id="SM00382">
    <property type="entry name" value="AAA"/>
    <property type="match status" value="1"/>
</dbReference>
<dbReference type="SUPFAM" id="SSF52540">
    <property type="entry name" value="P-loop containing nucleoside triphosphate hydrolases"/>
    <property type="match status" value="1"/>
</dbReference>
<dbReference type="SUPFAM" id="SSF48019">
    <property type="entry name" value="post-AAA+ oligomerization domain-like"/>
    <property type="match status" value="1"/>
</dbReference>
<sequence>MEEEEVLEVVEDEKAGPAAAEKRGPTDTLGSAPAASGHYELPWVEKYRPLKLCEVVGNEDTVSRLEVFAKEGNVPNIIIAGPPGTGKTTSILCLARALLGPALKDAVLELNASNDRGIDVVRNKIKMFAQQKVTLPKGRHKIIILDEADSMTDGAQQALRRTMEIYSKTTRFALACNASDKIIEPIQSRCAVLRYTKLTDSQILARLLKIVEKEDVPYTDDGLEAIIFTAQGDMRQALNNLQSTYSGFGFINSENVFKVCDEPHPLLVKEMIQHCINANIDEAYKILAHLWRLGYSPEDVIGNIFRVCKTFQMPEYLKLEFIKEIGYTHMKIAEGVNSLLQMAGLLARLCQKTAAPAAS</sequence>
<keyword id="KW-0067">ATP-binding</keyword>
<keyword id="KW-0235">DNA replication</keyword>
<keyword id="KW-0547">Nucleotide-binding</keyword>
<keyword id="KW-0539">Nucleus</keyword>
<keyword id="KW-1185">Reference proteome</keyword>
<proteinExistence type="evidence at transcript level"/>
<organism>
    <name type="scientific">Gallus gallus</name>
    <name type="common">Chicken</name>
    <dbReference type="NCBI Taxonomy" id="9031"/>
    <lineage>
        <taxon>Eukaryota</taxon>
        <taxon>Metazoa</taxon>
        <taxon>Chordata</taxon>
        <taxon>Craniata</taxon>
        <taxon>Vertebrata</taxon>
        <taxon>Euteleostomi</taxon>
        <taxon>Archelosauria</taxon>
        <taxon>Archosauria</taxon>
        <taxon>Dinosauria</taxon>
        <taxon>Saurischia</taxon>
        <taxon>Theropoda</taxon>
        <taxon>Coelurosauria</taxon>
        <taxon>Aves</taxon>
        <taxon>Neognathae</taxon>
        <taxon>Galloanserae</taxon>
        <taxon>Galliformes</taxon>
        <taxon>Phasianidae</taxon>
        <taxon>Phasianinae</taxon>
        <taxon>Gallus</taxon>
    </lineage>
</organism>
<gene>
    <name type="primary">RFC2</name>
</gene>
<protein>
    <recommendedName>
        <fullName>Replication factor C subunit 2</fullName>
    </recommendedName>
    <alternativeName>
        <fullName>Activator 1 40 kDa subunit</fullName>
        <shortName>A1 40 kDa subunit</shortName>
    </alternativeName>
    <alternativeName>
        <fullName>Activator 1 subunit 2</fullName>
    </alternativeName>
    <alternativeName>
        <fullName>Replication factor C 40 kDa subunit</fullName>
        <shortName>RF-C 40 kDa subunit</shortName>
        <shortName>RFC40</shortName>
    </alternativeName>
</protein>
<name>RFC2_CHICK</name>
<reference key="1">
    <citation type="journal article" date="1994" name="DNA Cell Biol.">
        <title>Molecular cloning of a chick cochlea cDNA encoding a subunit of DNA replication factor C/activator 1.</title>
        <authorList>
            <person name="Oberholtzer J."/>
            <person name="Cohen E.L."/>
            <person name="Davis J.G."/>
        </authorList>
    </citation>
    <scope>NUCLEOTIDE SEQUENCE [MRNA]</scope>
    <source>
        <strain>Leghorn</strain>
        <tissue>Cochlea</tissue>
    </source>
</reference>
<feature type="chain" id="PRO_0000121768" description="Replication factor C subunit 2">
    <location>
        <begin position="1"/>
        <end position="359"/>
    </location>
</feature>
<feature type="region of interest" description="Disordered" evidence="3">
    <location>
        <begin position="1"/>
        <end position="35"/>
    </location>
</feature>
<feature type="compositionally biased region" description="Acidic residues" evidence="3">
    <location>
        <begin position="1"/>
        <end position="11"/>
    </location>
</feature>
<feature type="compositionally biased region" description="Basic and acidic residues" evidence="3">
    <location>
        <begin position="12"/>
        <end position="25"/>
    </location>
</feature>
<feature type="binding site" evidence="2">
    <location>
        <begin position="81"/>
        <end position="88"/>
    </location>
    <ligand>
        <name>ATP</name>
        <dbReference type="ChEBI" id="CHEBI:30616"/>
    </ligand>
</feature>
<accession>P53033</accession>